<reference key="1">
    <citation type="submission" date="1997-01" db="EMBL/GenBank/DDBJ databases">
        <title>Sequence of minutes 4-25 of Escherichia coli.</title>
        <authorList>
            <person name="Chung E."/>
            <person name="Allen E."/>
            <person name="Araujo R."/>
            <person name="Aparicio A.M."/>
            <person name="Davis K."/>
            <person name="Duncan M."/>
            <person name="Federspiel N."/>
            <person name="Hyman R."/>
            <person name="Kalman S."/>
            <person name="Komp C."/>
            <person name="Kurdi O."/>
            <person name="Lew H."/>
            <person name="Lin D."/>
            <person name="Namath A."/>
            <person name="Oefner P."/>
            <person name="Roberts D."/>
            <person name="Schramm S."/>
            <person name="Davis R.W."/>
        </authorList>
    </citation>
    <scope>NUCLEOTIDE SEQUENCE [LARGE SCALE GENOMIC DNA]</scope>
    <source>
        <strain>K12 / MG1655 / ATCC 47076</strain>
    </source>
</reference>
<reference key="2">
    <citation type="journal article" date="1997" name="Science">
        <title>The complete genome sequence of Escherichia coli K-12.</title>
        <authorList>
            <person name="Blattner F.R."/>
            <person name="Plunkett G. III"/>
            <person name="Bloch C.A."/>
            <person name="Perna N.T."/>
            <person name="Burland V."/>
            <person name="Riley M."/>
            <person name="Collado-Vides J."/>
            <person name="Glasner J.D."/>
            <person name="Rode C.K."/>
            <person name="Mayhew G.F."/>
            <person name="Gregor J."/>
            <person name="Davis N.W."/>
            <person name="Kirkpatrick H.A."/>
            <person name="Goeden M.A."/>
            <person name="Rose D.J."/>
            <person name="Mau B."/>
            <person name="Shao Y."/>
        </authorList>
    </citation>
    <scope>NUCLEOTIDE SEQUENCE [LARGE SCALE GENOMIC DNA]</scope>
    <source>
        <strain>K12 / MG1655 / ATCC 47076</strain>
    </source>
</reference>
<reference key="3">
    <citation type="journal article" date="2006" name="Mol. Syst. Biol.">
        <title>Highly accurate genome sequences of Escherichia coli K-12 strains MG1655 and W3110.</title>
        <authorList>
            <person name="Hayashi K."/>
            <person name="Morooka N."/>
            <person name="Yamamoto Y."/>
            <person name="Fujita K."/>
            <person name="Isono K."/>
            <person name="Choi S."/>
            <person name="Ohtsubo E."/>
            <person name="Baba T."/>
            <person name="Wanner B.L."/>
            <person name="Mori H."/>
            <person name="Horiuchi T."/>
        </authorList>
    </citation>
    <scope>NUCLEOTIDE SEQUENCE [LARGE SCALE GENOMIC DNA]</scope>
    <source>
        <strain>K12 / W3110 / ATCC 27325 / DSM 5911</strain>
    </source>
</reference>
<reference key="4">
    <citation type="journal article" date="2013" name="J. Biol. Chem.">
        <title>The RclR protein is a reactive chlorine-specific transcription factor in Escherichia coli.</title>
        <authorList>
            <person name="Parker B.W."/>
            <person name="Schwessinger E.A."/>
            <person name="Jakob U."/>
            <person name="Gray M.J."/>
        </authorList>
    </citation>
    <scope>FUNCTION</scope>
    <scope>DNA-BINDING</scope>
    <scope>ACTIVITY REGULATION</scope>
    <scope>DISULFIDE BOND</scope>
    <scope>INDUCTION</scope>
    <scope>DISRUPTION PHENOTYPE</scope>
    <scope>GENE NAME</scope>
    <scope>MUTAGENESIS OF CYS-21; HIS-42; HIS-75 AND CYS-89</scope>
    <source>
        <strain>K12 / MG1655 / ATCC 47076</strain>
    </source>
</reference>
<evidence type="ECO:0000255" key="1">
    <source>
        <dbReference type="PROSITE-ProRule" id="PRU00593"/>
    </source>
</evidence>
<evidence type="ECO:0000269" key="2">
    <source>
    </source>
</evidence>
<evidence type="ECO:0000305" key="3">
    <source>
    </source>
</evidence>
<name>RCLR_ECOLI</name>
<dbReference type="EMBL" id="U73857">
    <property type="protein sequence ID" value="AAB18032.1"/>
    <property type="molecule type" value="Genomic_DNA"/>
</dbReference>
<dbReference type="EMBL" id="U00096">
    <property type="protein sequence ID" value="AAC73408.1"/>
    <property type="molecule type" value="Genomic_DNA"/>
</dbReference>
<dbReference type="EMBL" id="AP009048">
    <property type="protein sequence ID" value="BAE76089.1"/>
    <property type="molecule type" value="Genomic_DNA"/>
</dbReference>
<dbReference type="PIR" id="A64757">
    <property type="entry name" value="A64757"/>
</dbReference>
<dbReference type="RefSeq" id="NP_414839.1">
    <property type="nucleotide sequence ID" value="NC_000913.3"/>
</dbReference>
<dbReference type="RefSeq" id="WP_000339594.1">
    <property type="nucleotide sequence ID" value="NZ_SSZK01000067.1"/>
</dbReference>
<dbReference type="SMR" id="P77379"/>
<dbReference type="BioGRID" id="4262810">
    <property type="interactions" value="95"/>
</dbReference>
<dbReference type="FunCoup" id="P77379">
    <property type="interactions" value="209"/>
</dbReference>
<dbReference type="IntAct" id="P77379">
    <property type="interactions" value="5"/>
</dbReference>
<dbReference type="STRING" id="511145.b0305"/>
<dbReference type="PaxDb" id="511145-b0305"/>
<dbReference type="EnsemblBacteria" id="AAC73408">
    <property type="protein sequence ID" value="AAC73408"/>
    <property type="gene ID" value="b0305"/>
</dbReference>
<dbReference type="GeneID" id="945616"/>
<dbReference type="KEGG" id="ecj:JW0298"/>
<dbReference type="KEGG" id="eco:b0305"/>
<dbReference type="KEGG" id="ecoc:C3026_01495"/>
<dbReference type="KEGG" id="ecoc:C3026_24670"/>
<dbReference type="PATRIC" id="fig|511145.12.peg.312"/>
<dbReference type="EchoBASE" id="EB3351"/>
<dbReference type="eggNOG" id="COG2207">
    <property type="taxonomic scope" value="Bacteria"/>
</dbReference>
<dbReference type="HOGENOM" id="CLU_000445_81_0_6"/>
<dbReference type="InParanoid" id="P77379"/>
<dbReference type="OMA" id="YQNEWRL"/>
<dbReference type="OrthoDB" id="9783876at2"/>
<dbReference type="PhylomeDB" id="P77379"/>
<dbReference type="BioCyc" id="EcoCyc:G6175-MONOMER"/>
<dbReference type="PRO" id="PR:P77379"/>
<dbReference type="Proteomes" id="UP000000625">
    <property type="component" value="Chromosome"/>
</dbReference>
<dbReference type="GO" id="GO:0001216">
    <property type="term" value="F:DNA-binding transcription activator activity"/>
    <property type="evidence" value="ECO:0000314"/>
    <property type="project" value="EcoCyc"/>
</dbReference>
<dbReference type="GO" id="GO:0043565">
    <property type="term" value="F:sequence-specific DNA binding"/>
    <property type="evidence" value="ECO:0007669"/>
    <property type="project" value="InterPro"/>
</dbReference>
<dbReference type="GO" id="GO:0045893">
    <property type="term" value="P:positive regulation of DNA-templated transcription"/>
    <property type="evidence" value="ECO:0000270"/>
    <property type="project" value="EcoCyc"/>
</dbReference>
<dbReference type="GO" id="GO:0090347">
    <property type="term" value="P:regulation of organohalogen metabolic process"/>
    <property type="evidence" value="ECO:0000270"/>
    <property type="project" value="EcoCyc"/>
</dbReference>
<dbReference type="CDD" id="cd06995">
    <property type="entry name" value="cupin_YkgD-like_N"/>
    <property type="match status" value="1"/>
</dbReference>
<dbReference type="FunFam" id="1.10.10.60:FF:000305">
    <property type="entry name" value="AraC family transcriptional regulator"/>
    <property type="match status" value="1"/>
</dbReference>
<dbReference type="Gene3D" id="1.10.10.60">
    <property type="entry name" value="Homeodomain-like"/>
    <property type="match status" value="1"/>
</dbReference>
<dbReference type="Gene3D" id="2.60.120.10">
    <property type="entry name" value="Jelly Rolls"/>
    <property type="match status" value="1"/>
</dbReference>
<dbReference type="InterPro" id="IPR032783">
    <property type="entry name" value="AraC_lig"/>
</dbReference>
<dbReference type="InterPro" id="IPR050204">
    <property type="entry name" value="AraC_XylS_family_regulators"/>
</dbReference>
<dbReference type="InterPro" id="IPR009057">
    <property type="entry name" value="Homeodomain-like_sf"/>
</dbReference>
<dbReference type="InterPro" id="IPR018060">
    <property type="entry name" value="HTH_AraC"/>
</dbReference>
<dbReference type="InterPro" id="IPR053531">
    <property type="entry name" value="RCS-HTH_transactivator"/>
</dbReference>
<dbReference type="InterPro" id="IPR014710">
    <property type="entry name" value="RmlC-like_jellyroll"/>
</dbReference>
<dbReference type="InterPro" id="IPR011051">
    <property type="entry name" value="RmlC_Cupin_sf"/>
</dbReference>
<dbReference type="InterPro" id="IPR020449">
    <property type="entry name" value="Tscrpt_reg_AraC-type_HTH"/>
</dbReference>
<dbReference type="NCBIfam" id="NF040475">
    <property type="entry name" value="chlor_reg_RclR"/>
    <property type="match status" value="1"/>
</dbReference>
<dbReference type="PANTHER" id="PTHR46796:SF7">
    <property type="entry name" value="ARAC FAMILY TRANSCRIPTIONAL REGULATOR"/>
    <property type="match status" value="1"/>
</dbReference>
<dbReference type="PANTHER" id="PTHR46796">
    <property type="entry name" value="HTH-TYPE TRANSCRIPTIONAL ACTIVATOR RHAS-RELATED"/>
    <property type="match status" value="1"/>
</dbReference>
<dbReference type="Pfam" id="PF12852">
    <property type="entry name" value="Cupin_6"/>
    <property type="match status" value="1"/>
</dbReference>
<dbReference type="Pfam" id="PF12833">
    <property type="entry name" value="HTH_18"/>
    <property type="match status" value="1"/>
</dbReference>
<dbReference type="PRINTS" id="PR00032">
    <property type="entry name" value="HTHARAC"/>
</dbReference>
<dbReference type="SMART" id="SM00342">
    <property type="entry name" value="HTH_ARAC"/>
    <property type="match status" value="1"/>
</dbReference>
<dbReference type="SUPFAM" id="SSF46689">
    <property type="entry name" value="Homeodomain-like"/>
    <property type="match status" value="2"/>
</dbReference>
<dbReference type="SUPFAM" id="SSF51182">
    <property type="entry name" value="RmlC-like cupins"/>
    <property type="match status" value="1"/>
</dbReference>
<dbReference type="PROSITE" id="PS01124">
    <property type="entry name" value="HTH_ARAC_FAMILY_2"/>
    <property type="match status" value="1"/>
</dbReference>
<comment type="function">
    <text evidence="2">Involved in reactive chlorine species (RCS) stress resistance. Up-regulates, in response to hypochlorous acid (HOCl), the expression of three genes essential for survival of RCS stress (rclA, rclB and rclC) and its own expression.</text>
</comment>
<comment type="activity regulation">
    <text evidence="3">Oxydation of Cys-21 leads to partial activation of RclR, followed by the formation of an intramolecular disulfide bond between Cys-21 and Cys-89, which stabilizes the active form of RclR.</text>
</comment>
<comment type="induction">
    <text evidence="2">Autoregulated. Induced in response to HOCl.</text>
</comment>
<comment type="disruption phenotype">
    <text evidence="2">Mutants are more sensitive to HOCl treatment than wild-type cells.</text>
</comment>
<gene>
    <name type="primary">rclR</name>
    <name type="synonym">ykgD</name>
    <name type="ordered locus">b0305</name>
    <name type="ordered locus">JW0298</name>
</gene>
<feature type="chain" id="PRO_0000194613" description="RCS-specific HTH-type transcriptional activator RclR">
    <location>
        <begin position="1"/>
        <end position="284"/>
    </location>
</feature>
<feature type="domain" description="HTH araC/xylS-type" evidence="1">
    <location>
        <begin position="177"/>
        <end position="278"/>
    </location>
</feature>
<feature type="DNA-binding region" description="H-T-H motif" evidence="1">
    <location>
        <begin position="197"/>
        <end position="218"/>
    </location>
</feature>
<feature type="DNA-binding region" description="H-T-H motif" evidence="1">
    <location>
        <begin position="245"/>
        <end position="268"/>
    </location>
</feature>
<feature type="disulfide bond" evidence="3">
    <location>
        <begin position="21"/>
        <end position="89"/>
    </location>
</feature>
<feature type="mutagenesis site" description="Does not induce expression of target genes in response to HOCl." evidence="2">
    <original>C</original>
    <variation>A</variation>
    <location>
        <position position="21"/>
    </location>
</feature>
<feature type="mutagenesis site" description="Increases expression of the target genes in the absence of HOCl." evidence="2">
    <original>H</original>
    <variation>A</variation>
    <location>
        <position position="42"/>
    </location>
</feature>
<feature type="mutagenesis site" description="Increases expression of the target genes in the absence of HOCl. In vitro, increases DNA binding under reducing conditions." evidence="2">
    <original>H</original>
    <variation>A</variation>
    <location>
        <position position="75"/>
    </location>
</feature>
<feature type="mutagenesis site" description="Does not induce expression of target genes in response to HOCl." evidence="2">
    <original>C</original>
    <variation>A</variation>
    <location>
        <position position="89"/>
    </location>
</feature>
<proteinExistence type="evidence at protein level"/>
<accession>P77379</accession>
<accession>Q2MCB7</accession>
<keyword id="KW-0010">Activator</keyword>
<keyword id="KW-1015">Disulfide bond</keyword>
<keyword id="KW-0238">DNA-binding</keyword>
<keyword id="KW-1185">Reference proteome</keyword>
<keyword id="KW-0346">Stress response</keyword>
<keyword id="KW-0804">Transcription</keyword>
<keyword id="KW-0805">Transcription regulation</keyword>
<organism>
    <name type="scientific">Escherichia coli (strain K12)</name>
    <dbReference type="NCBI Taxonomy" id="83333"/>
    <lineage>
        <taxon>Bacteria</taxon>
        <taxon>Pseudomonadati</taxon>
        <taxon>Pseudomonadota</taxon>
        <taxon>Gammaproteobacteria</taxon>
        <taxon>Enterobacterales</taxon>
        <taxon>Enterobacteriaceae</taxon>
        <taxon>Escherichia</taxon>
    </lineage>
</organism>
<protein>
    <recommendedName>
        <fullName>RCS-specific HTH-type transcriptional activator RclR</fullName>
    </recommendedName>
    <alternativeName>
        <fullName>Reactive chlorine resistance protein R</fullName>
    </alternativeName>
</protein>
<sequence>MDALSRLLMLNAPQGTIDKNCVLGSDWQLPHGAGELSVIRWHALTQGAAKLEMPTGEIFTLRPGNVVLLPQNSAHRLSHVDNESTCIVCGTLRLQHSARYFLTSLPETLFLAPVNHSVEYNWLREAIPFLQQESRSAMPGVDALCSQICATFFTLAVREWIAQVNTEKNILSLLLHPRLGAVIQQMLEMPGHAWTVESLASIAHMSRASFAQLFRDVSGTTPLAVLTKLRLQIAAQMFSRETLPVVVIAESVGYASESSFHKAFVREFGCTPGEYRERVRQLAP</sequence>